<proteinExistence type="inferred from homology"/>
<name>RL29_LEPIC</name>
<reference key="1">
    <citation type="journal article" date="2004" name="J. Bacteriol.">
        <title>Comparative genomics of two Leptospira interrogans serovars reveals novel insights into physiology and pathogenesis.</title>
        <authorList>
            <person name="Nascimento A.L.T.O."/>
            <person name="Ko A.I."/>
            <person name="Martins E.A.L."/>
            <person name="Monteiro-Vitorello C.B."/>
            <person name="Ho P.L."/>
            <person name="Haake D.A."/>
            <person name="Verjovski-Almeida S."/>
            <person name="Hartskeerl R.A."/>
            <person name="Marques M.V."/>
            <person name="Oliveira M.C."/>
            <person name="Menck C.F.M."/>
            <person name="Leite L.C.C."/>
            <person name="Carrer H."/>
            <person name="Coutinho L.L."/>
            <person name="Degrave W.M."/>
            <person name="Dellagostin O.A."/>
            <person name="El-Dorry H."/>
            <person name="Ferro E.S."/>
            <person name="Ferro M.I.T."/>
            <person name="Furlan L.R."/>
            <person name="Gamberini M."/>
            <person name="Giglioti E.A."/>
            <person name="Goes-Neto A."/>
            <person name="Goldman G.H."/>
            <person name="Goldman M.H.S."/>
            <person name="Harakava R."/>
            <person name="Jeronimo S.M.B."/>
            <person name="Junqueira-de-Azevedo I.L.M."/>
            <person name="Kimura E.T."/>
            <person name="Kuramae E.E."/>
            <person name="Lemos E.G.M."/>
            <person name="Lemos M.V.F."/>
            <person name="Marino C.L."/>
            <person name="Nunes L.R."/>
            <person name="de Oliveira R.C."/>
            <person name="Pereira G.G."/>
            <person name="Reis M.S."/>
            <person name="Schriefer A."/>
            <person name="Siqueira W.J."/>
            <person name="Sommer P."/>
            <person name="Tsai S.M."/>
            <person name="Simpson A.J.G."/>
            <person name="Ferro J.A."/>
            <person name="Camargo L.E.A."/>
            <person name="Kitajima J.P."/>
            <person name="Setubal J.C."/>
            <person name="Van Sluys M.A."/>
        </authorList>
    </citation>
    <scope>NUCLEOTIDE SEQUENCE [LARGE SCALE GENOMIC DNA]</scope>
    <source>
        <strain>Fiocruz L1-130</strain>
    </source>
</reference>
<organism>
    <name type="scientific">Leptospira interrogans serogroup Icterohaemorrhagiae serovar copenhageni (strain Fiocruz L1-130)</name>
    <dbReference type="NCBI Taxonomy" id="267671"/>
    <lineage>
        <taxon>Bacteria</taxon>
        <taxon>Pseudomonadati</taxon>
        <taxon>Spirochaetota</taxon>
        <taxon>Spirochaetia</taxon>
        <taxon>Leptospirales</taxon>
        <taxon>Leptospiraceae</taxon>
        <taxon>Leptospira</taxon>
    </lineage>
</organism>
<comment type="similarity">
    <text evidence="1">Belongs to the universal ribosomal protein uL29 family.</text>
</comment>
<evidence type="ECO:0000255" key="1">
    <source>
        <dbReference type="HAMAP-Rule" id="MF_00374"/>
    </source>
</evidence>
<evidence type="ECO:0000256" key="2">
    <source>
        <dbReference type="SAM" id="MobiDB-lite"/>
    </source>
</evidence>
<evidence type="ECO:0000305" key="3"/>
<protein>
    <recommendedName>
        <fullName evidence="1">Large ribosomal subunit protein uL29</fullName>
    </recommendedName>
    <alternativeName>
        <fullName evidence="3">50S ribosomal protein L29</fullName>
    </alternativeName>
</protein>
<gene>
    <name evidence="1" type="primary">rpmC</name>
    <name type="ordered locus">LIC_12865</name>
</gene>
<dbReference type="EMBL" id="AE016823">
    <property type="protein sequence ID" value="AAS71418.1"/>
    <property type="molecule type" value="Genomic_DNA"/>
</dbReference>
<dbReference type="RefSeq" id="WP_000721426.1">
    <property type="nucleotide sequence ID" value="NC_005823.1"/>
</dbReference>
<dbReference type="SMR" id="Q72NG9"/>
<dbReference type="GeneID" id="61142739"/>
<dbReference type="KEGG" id="lic:LIC_12865"/>
<dbReference type="HOGENOM" id="CLU_2382618_0_0_12"/>
<dbReference type="Proteomes" id="UP000007037">
    <property type="component" value="Chromosome I"/>
</dbReference>
<dbReference type="GO" id="GO:0022625">
    <property type="term" value="C:cytosolic large ribosomal subunit"/>
    <property type="evidence" value="ECO:0007669"/>
    <property type="project" value="TreeGrafter"/>
</dbReference>
<dbReference type="GO" id="GO:0003735">
    <property type="term" value="F:structural constituent of ribosome"/>
    <property type="evidence" value="ECO:0007669"/>
    <property type="project" value="InterPro"/>
</dbReference>
<dbReference type="GO" id="GO:0006412">
    <property type="term" value="P:translation"/>
    <property type="evidence" value="ECO:0007669"/>
    <property type="project" value="UniProtKB-UniRule"/>
</dbReference>
<dbReference type="Gene3D" id="1.10.287.310">
    <property type="match status" value="1"/>
</dbReference>
<dbReference type="HAMAP" id="MF_00374">
    <property type="entry name" value="Ribosomal_uL29"/>
    <property type="match status" value="1"/>
</dbReference>
<dbReference type="InterPro" id="IPR050063">
    <property type="entry name" value="Ribosomal_protein_uL29"/>
</dbReference>
<dbReference type="InterPro" id="IPR001854">
    <property type="entry name" value="Ribosomal_uL29"/>
</dbReference>
<dbReference type="InterPro" id="IPR036049">
    <property type="entry name" value="Ribosomal_uL29_sf"/>
</dbReference>
<dbReference type="NCBIfam" id="TIGR00012">
    <property type="entry name" value="L29"/>
    <property type="match status" value="1"/>
</dbReference>
<dbReference type="PANTHER" id="PTHR10916">
    <property type="entry name" value="60S RIBOSOMAL PROTEIN L35/50S RIBOSOMAL PROTEIN L29"/>
    <property type="match status" value="1"/>
</dbReference>
<dbReference type="PANTHER" id="PTHR10916:SF0">
    <property type="entry name" value="LARGE RIBOSOMAL SUBUNIT PROTEIN UL29C"/>
    <property type="match status" value="1"/>
</dbReference>
<dbReference type="Pfam" id="PF00831">
    <property type="entry name" value="Ribosomal_L29"/>
    <property type="match status" value="1"/>
</dbReference>
<dbReference type="SUPFAM" id="SSF46561">
    <property type="entry name" value="Ribosomal protein L29 (L29p)"/>
    <property type="match status" value="1"/>
</dbReference>
<accession>Q72NG9</accession>
<sequence length="94" mass="10958">MKKIKLQELKDSEILEQLEEARKVLRNSRFQYGVARSLENPKIISNTKKKIAKLLTIQRERQLKANPGERKSRVFSRAKRKKKNLARLSAKAKG</sequence>
<keyword id="KW-0687">Ribonucleoprotein</keyword>
<keyword id="KW-0689">Ribosomal protein</keyword>
<feature type="chain" id="PRO_0000130410" description="Large ribosomal subunit protein uL29">
    <location>
        <begin position="1"/>
        <end position="94"/>
    </location>
</feature>
<feature type="region of interest" description="Disordered" evidence="2">
    <location>
        <begin position="65"/>
        <end position="94"/>
    </location>
</feature>
<feature type="compositionally biased region" description="Basic residues" evidence="2">
    <location>
        <begin position="73"/>
        <end position="94"/>
    </location>
</feature>